<reference evidence="9 11" key="1">
    <citation type="journal article" date="2007" name="Science">
        <title>Genomic minimalism in the early diverging intestinal parasite Giardia lamblia.</title>
        <authorList>
            <person name="Morrison H.G."/>
            <person name="McArthur A.G."/>
            <person name="Gillin F.D."/>
            <person name="Aley S.B."/>
            <person name="Adam R.D."/>
            <person name="Olsen G.J."/>
            <person name="Best A.A."/>
            <person name="Cande W.Z."/>
            <person name="Chen F."/>
            <person name="Cipriano M.J."/>
            <person name="Davids B.J."/>
            <person name="Dawson S.C."/>
            <person name="Elmendorf H.G."/>
            <person name="Hehl A.B."/>
            <person name="Holder M.E."/>
            <person name="Huse S.M."/>
            <person name="Kim U.U."/>
            <person name="Lasek-Nesselquist E."/>
            <person name="Manning G."/>
            <person name="Nigam A."/>
            <person name="Nixon J.E.J."/>
            <person name="Palm D."/>
            <person name="Passamaneck N.E."/>
            <person name="Prabhu A."/>
            <person name="Reich C.I."/>
            <person name="Reiner D.S."/>
            <person name="Samuelson J."/>
            <person name="Svard S.G."/>
            <person name="Sogin M.L."/>
        </authorList>
    </citation>
    <scope>NUCLEOTIDE SEQUENCE [LARGE SCALE GENOMIC DNA]</scope>
    <source>
        <strain evidence="11">ATCC 50803 / WB clone C6</strain>
    </source>
</reference>
<reference evidence="10" key="2">
    <citation type="submission" date="2019-07" db="EMBL/GenBank/DDBJ databases">
        <title>New Giardia intestinalis WB genome in near-complete chromosomes.</title>
        <authorList>
            <person name="Xu F."/>
            <person name="Jex A."/>
            <person name="Svard S.G."/>
        </authorList>
    </citation>
    <scope>NUCLEOTIDE SEQUENCE [LARGE SCALE GENOMIC DNA]</scope>
    <source>
        <strain evidence="10">ATCC 50803 / WB clone C6</strain>
    </source>
</reference>
<reference key="3">
    <citation type="journal article" date="2011" name="PLoS Negl. Trop. Dis.">
        <title>Novel structural components of the ventral disc and lateral crest in Giardia intestinalis.</title>
        <authorList>
            <person name="Hagen K.D."/>
            <person name="Hirakawa M.P."/>
            <person name="House S.A."/>
            <person name="Schwartz C.L."/>
            <person name="Pham J.K."/>
            <person name="Cipriano M.J."/>
            <person name="De La Torre M.J."/>
            <person name="Sek A.C."/>
            <person name="Du G."/>
            <person name="Forsythe B.M."/>
            <person name="Dawson S.C."/>
        </authorList>
    </citation>
    <scope>IDENTIFICATION BY MASS SPECTROMETRY</scope>
    <scope>SUBCELLULAR LOCATION</scope>
    <source>
        <strain evidence="6">ATCC 50803 / WB clone C6</strain>
    </source>
</reference>
<reference key="4">
    <citation type="journal article" date="2012" name="Eukaryot. Cell">
        <title>The Giardia median body protein is a ventral disc protein that is critical for maintaining a domed disc conformation during attachment.</title>
        <authorList>
            <person name="Woessner D.J."/>
            <person name="Dawson S.C."/>
        </authorList>
    </citation>
    <scope>FUNCTION</scope>
    <scope>SUBCELLULAR LOCATION</scope>
    <scope>DISRUPTION PHENOTYPE</scope>
    <source>
        <strain evidence="7">ATCC 50803 / WB clone C6</strain>
    </source>
</reference>
<reference key="5">
    <citation type="journal article" date="2019" name="Mol. Biol. Cell">
        <title>Robust and stable transcriptional repression in Giardia using CRISPRi.</title>
        <authorList>
            <person name="McInally S.G."/>
            <person name="Hagen K.D."/>
            <person name="Nosala C."/>
            <person name="Williams J."/>
            <person name="Nguyen K."/>
            <person name="Booker J."/>
            <person name="Jones K."/>
            <person name="Dawson S.C."/>
        </authorList>
    </citation>
    <scope>DISRUPTION PHENOTYPE</scope>
    <source>
        <strain evidence="8">ATCC 50803 / WB clone C6</strain>
    </source>
</reference>
<protein>
    <recommendedName>
        <fullName evidence="6 7 8 9">Median body protein</fullName>
        <shortName evidence="6 7 8">MBP</shortName>
    </recommendedName>
    <alternativeName>
        <fullName evidence="6 7">Disc-associated protein 16343</fullName>
        <shortName evidence="6 7">DAP16343</shortName>
    </alternativeName>
    <alternativeName>
        <fullName evidence="6">MB protein</fullName>
    </alternativeName>
</protein>
<name>MEDB_GIAIC</name>
<evidence type="ECO:0000250" key="1">
    <source>
        <dbReference type="UniProtKB" id="Q08014"/>
    </source>
</evidence>
<evidence type="ECO:0000255" key="2"/>
<evidence type="ECO:0000269" key="3">
    <source>
    </source>
</evidence>
<evidence type="ECO:0000269" key="4">
    <source>
    </source>
</evidence>
<evidence type="ECO:0000269" key="5">
    <source>
    </source>
</evidence>
<evidence type="ECO:0000303" key="6">
    <source>
    </source>
</evidence>
<evidence type="ECO:0000303" key="7">
    <source>
    </source>
</evidence>
<evidence type="ECO:0000303" key="8">
    <source>
    </source>
</evidence>
<evidence type="ECO:0000312" key="9">
    <source>
        <dbReference type="EMBL" id="EDO79735.1"/>
    </source>
</evidence>
<evidence type="ECO:0000312" key="10">
    <source>
        <dbReference type="EMBL" id="KAE8305747.1"/>
    </source>
</evidence>
<evidence type="ECO:0000312" key="11">
    <source>
        <dbReference type="Proteomes" id="UP000001548"/>
    </source>
</evidence>
<keyword id="KW-0175">Coiled coil</keyword>
<keyword id="KW-0963">Cytoplasm</keyword>
<keyword id="KW-0206">Cytoskeleton</keyword>
<keyword id="KW-0493">Microtubule</keyword>
<keyword id="KW-1185">Reference proteome</keyword>
<sequence>MSEAMVFSKIDEYTLFMSRSLQKSLKTFAEQVMALIYQYKDTLVEDRLALTNTLDEAVQILVDSGKEEADKLGFNIYSAVSRYISEIWASQSGQTTAAPPATDIDGLHRQLVALKNSLGQNAELYEQRCQLQAELRELQEFSENPAAAVEEIMQLKAQIDELKYGASNHNALVQEKRDLERHLADLRLSRQDTNSRLPQEIDRLRAEIEDEKRNLPHMDDLQRQRDELQRQLDTIRRRGNTSGVMAEIENIQRQIDDANSSASSEHELRMLRAEVETLRAQKSIVTRLEAENADLRRELQDIRGRAQEMSASQRYSANQAQELQEKAMQAEELLQQKIELRRQLHEALERADAGEAALRDKRRLEDEIKGLQLRLTENDFTKERSILRNEIQAKTTEIDTLISDRRALETKLLNKEAEVDQLLYEKQLLKTELNSYRGTNEDIDKLTFEKRQLVEELNDLREKTIKYDQLAREKAALETELKENSYNFDQLLEQKQQMRSDLNALREKAADYERVDRELRLKDKELEEKNAEIERLLEDRRVMRTELLHSKESATDVDSLIQEKRLRDRELAHLRDRMSEYERVVEERIQKEKENNLLKQRITELEQQQRTATVRETEMSALREKANELDGYNRERQAREHEINMLRDKALESDKLRQDNRVMAMELTELREKVQLLEKLQYEKRARDVEMLELRHKAMDVDTLVEEKQRLEMRLAELKIKVNNYDQLADDKARLQEQLKEMSDKLIEFEMIMDDNRRLKLQVKELDLKTANMEKLYEEYKKLEDQLKATKAMTSTGMGVSAASPAFYKTKSMRLTQQNNQMKNTTDNLLTRDIPKLIDKLIERPAGTTTMGRSGKF</sequence>
<proteinExistence type="evidence at protein level"/>
<accession>A8BER9</accession>
<gene>
    <name evidence="10" type="ORF">GL50803_0016343</name>
    <name evidence="9" type="ORF">GL50803_16343</name>
</gene>
<dbReference type="EMBL" id="AACB02000014">
    <property type="protein sequence ID" value="EDO79735.1"/>
    <property type="molecule type" value="Genomic_DNA"/>
</dbReference>
<dbReference type="EMBL" id="AACB03000001">
    <property type="protein sequence ID" value="KAE8305747.1"/>
    <property type="molecule type" value="Genomic_DNA"/>
</dbReference>
<dbReference type="RefSeq" id="XP_001707409.1">
    <property type="nucleotide sequence ID" value="XM_001707357.1"/>
</dbReference>
<dbReference type="SMR" id="A8BER9"/>
<dbReference type="STRING" id="184922.A8BER9"/>
<dbReference type="EnsemblProtists" id="EDO79735">
    <property type="protein sequence ID" value="EDO79735"/>
    <property type="gene ID" value="GL50803_16343"/>
</dbReference>
<dbReference type="GeneID" id="5700294"/>
<dbReference type="KEGG" id="gla:GL50803_0016343"/>
<dbReference type="VEuPathDB" id="GiardiaDB:GL50803_16343"/>
<dbReference type="HOGENOM" id="CLU_333570_0_0_1"/>
<dbReference type="InParanoid" id="A8BER9"/>
<dbReference type="OMA" id="ISEIWAS"/>
<dbReference type="Proteomes" id="UP000001548">
    <property type="component" value="Chromosome 5"/>
</dbReference>
<dbReference type="GO" id="GO:0005737">
    <property type="term" value="C:cytoplasm"/>
    <property type="evidence" value="ECO:0007669"/>
    <property type="project" value="UniProtKB-KW"/>
</dbReference>
<dbReference type="GO" id="GO:0097568">
    <property type="term" value="C:median body"/>
    <property type="evidence" value="ECO:0000314"/>
    <property type="project" value="UniProtKB"/>
</dbReference>
<dbReference type="GO" id="GO:0005874">
    <property type="term" value="C:microtubule"/>
    <property type="evidence" value="ECO:0007669"/>
    <property type="project" value="UniProtKB-KW"/>
</dbReference>
<dbReference type="GO" id="GO:0097591">
    <property type="term" value="C:ventral disc lateral crest"/>
    <property type="evidence" value="ECO:0000314"/>
    <property type="project" value="UniProtKB"/>
</dbReference>
<dbReference type="GO" id="GO:0097593">
    <property type="term" value="C:ventral disc microtubule array"/>
    <property type="evidence" value="ECO:0000314"/>
    <property type="project" value="UniProtKB"/>
</dbReference>
<dbReference type="GO" id="GO:0097592">
    <property type="term" value="C:ventral disc overlap zone"/>
    <property type="evidence" value="ECO:0000314"/>
    <property type="project" value="UniProtKB"/>
</dbReference>
<dbReference type="GO" id="GO:0005200">
    <property type="term" value="F:structural constituent of cytoskeleton"/>
    <property type="evidence" value="ECO:0000315"/>
    <property type="project" value="UniProtKB"/>
</dbReference>
<dbReference type="GO" id="GO:0000226">
    <property type="term" value="P:microtubule cytoskeleton organization"/>
    <property type="evidence" value="ECO:0000315"/>
    <property type="project" value="UniProtKB"/>
</dbReference>
<organism evidence="9">
    <name type="scientific">Giardia intestinalis (strain ATCC 50803 / WB clone C6)</name>
    <name type="common">Giardia lamblia</name>
    <dbReference type="NCBI Taxonomy" id="184922"/>
    <lineage>
        <taxon>Eukaryota</taxon>
        <taxon>Metamonada</taxon>
        <taxon>Diplomonadida</taxon>
        <taxon>Hexamitidae</taxon>
        <taxon>Giardiinae</taxon>
        <taxon>Giardia</taxon>
    </lineage>
</organism>
<comment type="function">
    <text evidence="1 4">Structural component of the ventral disk involved in maintanance of a domed conformation of the disk required for proper attachment (PubMed:22247266). May have a role in immobilizing the microtubules between cell divisions (By similarity).</text>
</comment>
<comment type="subcellular location">
    <subcellularLocation>
        <location evidence="3 4">Cytoplasm</location>
        <location evidence="3 4">Cytoskeleton</location>
    </subcellularLocation>
    <text evidence="3 4">Localizes primarily to the overlap zone of the ventral disk microtubules, the disk edges and the plus ends of the disk microtubule spiral array (PubMed:22247266). Localizes throughout the spiral of the ventral disk and to the lateral crest surrounding the ventral disk (PubMed:22206034). Localizes intermittently to the median body mainly in prophase (PubMed:22206034, PubMed:22247266). Does not localize to the microribbons or cross bridges of the ventral disk (PubMed:22247266).</text>
</comment>
<comment type="domain">
    <text evidence="1">Shows an alpha-helical coiled coil structure (30 repeating heptads).</text>
</comment>
<comment type="disruption phenotype">
    <text evidence="4 5">Morpholino knockdown has defects in ventral disk formation and an abnormal ventral disk structure in a nondomed or flattened horseshoe-shaped conformation (PubMed:22247266). The lateral crest of the morpholino knockdown is discontinous and mispositioned (PubMed:22247266). Glass substrate attached morpholino knockdown trophozoites have a significantly decreased ability to withstand normal and shear forces, and they have aberrant plasma membrane contacts with the surface, including those of the bare area (PubMed:22247266). Knockdown of expression by CRISPR interference (CRISPRi) system results in severe structural defects of the ventral disk with incompletely closed or aberrant disk (PubMed:30379614). Simultaneous knockdown of kinesin-13 and the ventral disk median body protein (MBP) by the CRISPRi system has both longer caudal flagella and structurally defective ventral disk (PubMed:30379614).</text>
</comment>
<feature type="chain" id="PRO_0000459402" description="Median body protein">
    <location>
        <begin position="1"/>
        <end position="857"/>
    </location>
</feature>
<feature type="coiled-coil region" evidence="2">
    <location>
        <begin position="169"/>
        <end position="546"/>
    </location>
</feature>
<feature type="coiled-coil region" evidence="2">
    <location>
        <begin position="571"/>
        <end position="793"/>
    </location>
</feature>